<gene>
    <name type="ordered locus">YPR084W</name>
</gene>
<accession>Q06821</accession>
<accession>D6W486</accession>
<proteinExistence type="evidence at protein level"/>
<organism>
    <name type="scientific">Saccharomyces cerevisiae (strain ATCC 204508 / S288c)</name>
    <name type="common">Baker's yeast</name>
    <dbReference type="NCBI Taxonomy" id="559292"/>
    <lineage>
        <taxon>Eukaryota</taxon>
        <taxon>Fungi</taxon>
        <taxon>Dikarya</taxon>
        <taxon>Ascomycota</taxon>
        <taxon>Saccharomycotina</taxon>
        <taxon>Saccharomycetes</taxon>
        <taxon>Saccharomycetales</taxon>
        <taxon>Saccharomycetaceae</taxon>
        <taxon>Saccharomyces</taxon>
    </lineage>
</organism>
<evidence type="ECO:0000256" key="1">
    <source>
        <dbReference type="SAM" id="MobiDB-lite"/>
    </source>
</evidence>
<dbReference type="EMBL" id="U51033">
    <property type="protein sequence ID" value="AAB68133.1"/>
    <property type="molecule type" value="Genomic_DNA"/>
</dbReference>
<dbReference type="EMBL" id="BK006949">
    <property type="protein sequence ID" value="DAA11502.1"/>
    <property type="molecule type" value="Genomic_DNA"/>
</dbReference>
<dbReference type="PIR" id="S69070">
    <property type="entry name" value="S69070"/>
</dbReference>
<dbReference type="RefSeq" id="NP_015409.1">
    <property type="nucleotide sequence ID" value="NM_001184181.1"/>
</dbReference>
<dbReference type="SMR" id="Q06821"/>
<dbReference type="BioGRID" id="36255">
    <property type="interactions" value="147"/>
</dbReference>
<dbReference type="DIP" id="DIP-3888N"/>
<dbReference type="FunCoup" id="Q06821">
    <property type="interactions" value="19"/>
</dbReference>
<dbReference type="STRING" id="4932.YPR084W"/>
<dbReference type="iPTMnet" id="Q06821"/>
<dbReference type="PaxDb" id="4932-YPR084W"/>
<dbReference type="PeptideAtlas" id="Q06821"/>
<dbReference type="EnsemblFungi" id="YPR084W_mRNA">
    <property type="protein sequence ID" value="YPR084W"/>
    <property type="gene ID" value="YPR084W"/>
</dbReference>
<dbReference type="GeneID" id="856199"/>
<dbReference type="KEGG" id="sce:YPR084W"/>
<dbReference type="AGR" id="SGD:S000006288"/>
<dbReference type="SGD" id="S000006288">
    <property type="gene designation" value="YPR084W"/>
</dbReference>
<dbReference type="VEuPathDB" id="FungiDB:YPR084W"/>
<dbReference type="eggNOG" id="ENOG502QVZN">
    <property type="taxonomic scope" value="Eukaryota"/>
</dbReference>
<dbReference type="HOGENOM" id="CLU_674749_0_0_1"/>
<dbReference type="InParanoid" id="Q06821"/>
<dbReference type="OMA" id="YFFVYSA"/>
<dbReference type="OrthoDB" id="3995714at2759"/>
<dbReference type="BioCyc" id="YEAST:G3O-34228-MONOMER"/>
<dbReference type="BioGRID-ORCS" id="856199">
    <property type="hits" value="5 hits in 10 CRISPR screens"/>
</dbReference>
<dbReference type="PRO" id="PR:Q06821"/>
<dbReference type="Proteomes" id="UP000002311">
    <property type="component" value="Chromosome XVI"/>
</dbReference>
<dbReference type="RNAct" id="Q06821">
    <property type="molecule type" value="protein"/>
</dbReference>
<dbReference type="InterPro" id="IPR027417">
    <property type="entry name" value="P-loop_NTPase"/>
</dbReference>
<dbReference type="SUPFAM" id="SSF52540">
    <property type="entry name" value="P-loop containing nucleoside triphosphate hydrolases"/>
    <property type="match status" value="1"/>
</dbReference>
<feature type="chain" id="PRO_0000242638" description="Uncharacterized protein YPR084W">
    <location>
        <begin position="1"/>
        <end position="456"/>
    </location>
</feature>
<feature type="region of interest" description="Disordered" evidence="1">
    <location>
        <begin position="415"/>
        <end position="444"/>
    </location>
</feature>
<feature type="compositionally biased region" description="Low complexity" evidence="1">
    <location>
        <begin position="415"/>
        <end position="428"/>
    </location>
</feature>
<sequence>MSEKASEERPIRLAVLGGTSTGKTSLVSRLTVNIVHEVHYPTRNQTNWLFGFVPSSILARAILDEQAHERLCLRSPSSQTLEPIFPSPQVSKNVLLSPLVFQASTDNFQSVRLHNKSHSRRSLSLDKSDSPLYQTFSNDINSQSVPKIKADQLNVIEHFKLPLNYIPPTYAPIQIDIIDTPGFSPDNVVPFLEVSLFRNLGKSILHGLADEPRRPVSTTSLLVASGASELNGKVDGYILVYSAVPELNHIGGPPEYGDDVMNTDTENVSDGGFELLKVIRNCILDAWTEFRNYEKRWEEGKEDDIYSLVYSLRHLWSKNSKEKSAKIEQLRSYNTKLKSIELDPSSPDSPPPCIIVCSHVNHELASPMLIEMGRQLATKWKYGFVGIDSMDDLNVDVAVSLLIKEISEKMKLLVSNSNGSSSSGNSSSIYNSHLMNDKKKNNNAGLNKNMLKKIIK</sequence>
<reference key="1">
    <citation type="journal article" date="1997" name="Nature">
        <title>The nucleotide sequence of Saccharomyces cerevisiae chromosome XVI.</title>
        <authorList>
            <person name="Bussey H."/>
            <person name="Storms R.K."/>
            <person name="Ahmed A."/>
            <person name="Albermann K."/>
            <person name="Allen E."/>
            <person name="Ansorge W."/>
            <person name="Araujo R."/>
            <person name="Aparicio A."/>
            <person name="Barrell B.G."/>
            <person name="Badcock K."/>
            <person name="Benes V."/>
            <person name="Botstein D."/>
            <person name="Bowman S."/>
            <person name="Brueckner M."/>
            <person name="Carpenter J."/>
            <person name="Cherry J.M."/>
            <person name="Chung E."/>
            <person name="Churcher C.M."/>
            <person name="Coster F."/>
            <person name="Davis K."/>
            <person name="Davis R.W."/>
            <person name="Dietrich F.S."/>
            <person name="Delius H."/>
            <person name="DiPaolo T."/>
            <person name="Dubois E."/>
            <person name="Duesterhoeft A."/>
            <person name="Duncan M."/>
            <person name="Floeth M."/>
            <person name="Fortin N."/>
            <person name="Friesen J.D."/>
            <person name="Fritz C."/>
            <person name="Goffeau A."/>
            <person name="Hall J."/>
            <person name="Hebling U."/>
            <person name="Heumann K."/>
            <person name="Hilbert H."/>
            <person name="Hillier L.W."/>
            <person name="Hunicke-Smith S."/>
            <person name="Hyman R.W."/>
            <person name="Johnston M."/>
            <person name="Kalman S."/>
            <person name="Kleine K."/>
            <person name="Komp C."/>
            <person name="Kurdi O."/>
            <person name="Lashkari D."/>
            <person name="Lew H."/>
            <person name="Lin A."/>
            <person name="Lin D."/>
            <person name="Louis E.J."/>
            <person name="Marathe R."/>
            <person name="Messenguy F."/>
            <person name="Mewes H.-W."/>
            <person name="Mirtipati S."/>
            <person name="Moestl D."/>
            <person name="Mueller-Auer S."/>
            <person name="Namath A."/>
            <person name="Nentwich U."/>
            <person name="Oefner P."/>
            <person name="Pearson D."/>
            <person name="Petel F.X."/>
            <person name="Pohl T.M."/>
            <person name="Purnelle B."/>
            <person name="Rajandream M.A."/>
            <person name="Rechmann S."/>
            <person name="Rieger M."/>
            <person name="Riles L."/>
            <person name="Roberts D."/>
            <person name="Schaefer M."/>
            <person name="Scharfe M."/>
            <person name="Scherens B."/>
            <person name="Schramm S."/>
            <person name="Schroeder M."/>
            <person name="Sdicu A.-M."/>
            <person name="Tettelin H."/>
            <person name="Urrestarazu L.A."/>
            <person name="Ushinsky S."/>
            <person name="Vierendeels F."/>
            <person name="Vissers S."/>
            <person name="Voss H."/>
            <person name="Walsh S.V."/>
            <person name="Wambutt R."/>
            <person name="Wang Y."/>
            <person name="Wedler E."/>
            <person name="Wedler H."/>
            <person name="Winnett E."/>
            <person name="Zhong W.-W."/>
            <person name="Zollner A."/>
            <person name="Vo D.H."/>
            <person name="Hani J."/>
        </authorList>
    </citation>
    <scope>NUCLEOTIDE SEQUENCE [LARGE SCALE GENOMIC DNA]</scope>
    <source>
        <strain>ATCC 204508 / S288c</strain>
    </source>
</reference>
<reference key="2">
    <citation type="journal article" date="2014" name="G3 (Bethesda)">
        <title>The reference genome sequence of Saccharomyces cerevisiae: Then and now.</title>
        <authorList>
            <person name="Engel S.R."/>
            <person name="Dietrich F.S."/>
            <person name="Fisk D.G."/>
            <person name="Binkley G."/>
            <person name="Balakrishnan R."/>
            <person name="Costanzo M.C."/>
            <person name="Dwight S.S."/>
            <person name="Hitz B.C."/>
            <person name="Karra K."/>
            <person name="Nash R.S."/>
            <person name="Weng S."/>
            <person name="Wong E.D."/>
            <person name="Lloyd P."/>
            <person name="Skrzypek M.S."/>
            <person name="Miyasato S.R."/>
            <person name="Simison M."/>
            <person name="Cherry J.M."/>
        </authorList>
    </citation>
    <scope>GENOME REANNOTATION</scope>
    <source>
        <strain>ATCC 204508 / S288c</strain>
    </source>
</reference>
<reference key="3">
    <citation type="journal article" date="2009" name="Science">
        <title>Global analysis of Cdk1 substrate phosphorylation sites provides insights into evolution.</title>
        <authorList>
            <person name="Holt L.J."/>
            <person name="Tuch B.B."/>
            <person name="Villen J."/>
            <person name="Johnson A.D."/>
            <person name="Gygi S.P."/>
            <person name="Morgan D.O."/>
        </authorList>
    </citation>
    <scope>IDENTIFICATION BY MASS SPECTROMETRY [LARGE SCALE ANALYSIS]</scope>
</reference>
<protein>
    <recommendedName>
        <fullName>Uncharacterized protein YPR084W</fullName>
    </recommendedName>
</protein>
<name>YP084_YEAST</name>
<keyword id="KW-1185">Reference proteome</keyword>